<reference key="1">
    <citation type="journal article" date="2002" name="Cell. Mol. Biol.">
        <title>Molecular cloning and characterization of the mouse reticulon 3 cDNA.</title>
        <authorList>
            <person name="Hamada N."/>
            <person name="Iwahashi J."/>
            <person name="Suzuki K."/>
            <person name="Ogi H."/>
            <person name="Kashiwagi T."/>
            <person name="Hara K."/>
            <person name="Toyoda M."/>
            <person name="Yamada T."/>
            <person name="Toyoda T."/>
        </authorList>
    </citation>
    <scope>NUCLEOTIDE SEQUENCE [MRNA] (ISOFORM 3)</scope>
</reference>
<reference key="2">
    <citation type="journal article" date="2003" name="FASEB J.">
        <title>A reticular rhapsody: phylogenic evolution and nomenclature of the RTN/Nogo gene family.</title>
        <authorList>
            <person name="Oertle T."/>
            <person name="Klinger M."/>
            <person name="Stuermer C.A.O."/>
            <person name="Schwab M.E."/>
        </authorList>
    </citation>
    <scope>NUCLEOTIDE SEQUENCE [MRNA] (ISOFORM 3)</scope>
    <scope>IDENTIFICATION (ISOFORM 4)</scope>
</reference>
<reference key="3">
    <citation type="journal article" date="2005" name="Biochem. J.">
        <title>Tissue specificity and regulation of the N-terminal diversity of reticulon 3.</title>
        <authorList>
            <person name="Di Scala F."/>
            <person name="Dupuis L."/>
            <person name="Gaiddon C."/>
            <person name="De Tapia M."/>
            <person name="Jokic N."/>
            <person name="Gonzalez de Aguilar J.-L."/>
            <person name="Raul J.-S."/>
            <person name="Ludes B."/>
            <person name="Loeffler J.-P."/>
        </authorList>
    </citation>
    <scope>NUCLEOTIDE SEQUENCE [MRNA] (ISOFORM 3)</scope>
    <scope>NUCLEOTIDE SEQUENCE [MRNA] OF 83-964 (ISOFORM 1)</scope>
    <scope>ALTERNATIVE SPLICING (ISOFORMS 1; 2; 3; 4 AND 5)</scope>
    <scope>TISSUE SPECIFICITY</scope>
    <scope>SUBCELLULAR LOCATION</scope>
    <source>
        <strain>FVB/N</strain>
    </source>
</reference>
<reference key="4">
    <citation type="journal article" date="2005" name="Brain Res. Mol. Brain Res.">
        <title>Identification of a new RTN3 transcript, RTN3-A1, and its distribution in adult mouse brain.</title>
        <authorList>
            <person name="Cai Y."/>
            <person name="Saiyin H."/>
            <person name="Lin Q."/>
            <person name="Zhang P."/>
            <person name="Tang L."/>
            <person name="Pan X."/>
            <person name="Yu L."/>
        </authorList>
    </citation>
    <scope>NUCLEOTIDE SEQUENCE [MRNA] (ISOFORMS 1 AND 2)</scope>
    <scope>TISSUE SPECIFICITY</scope>
    <source>
        <strain>C57BL/6J</strain>
    </source>
</reference>
<reference key="5">
    <citation type="submission" date="1999-10" db="EMBL/GenBank/DDBJ databases">
        <title>Cloning and expression profile of a novel mouse cDNA encoding a human RTN3 homolog.</title>
        <authorList>
            <person name="Huang X."/>
            <person name="Zhou Y."/>
            <person name="Qiang H."/>
            <person name="Yuan J."/>
            <person name="Qiang B."/>
        </authorList>
    </citation>
    <scope>NUCLEOTIDE SEQUENCE [MRNA] (ISOFORM 3)</scope>
</reference>
<reference key="6">
    <citation type="journal article" date="2005" name="Science">
        <title>The transcriptional landscape of the mammalian genome.</title>
        <authorList>
            <person name="Carninci P."/>
            <person name="Kasukawa T."/>
            <person name="Katayama S."/>
            <person name="Gough J."/>
            <person name="Frith M.C."/>
            <person name="Maeda N."/>
            <person name="Oyama R."/>
            <person name="Ravasi T."/>
            <person name="Lenhard B."/>
            <person name="Wells C."/>
            <person name="Kodzius R."/>
            <person name="Shimokawa K."/>
            <person name="Bajic V.B."/>
            <person name="Brenner S.E."/>
            <person name="Batalov S."/>
            <person name="Forrest A.R."/>
            <person name="Zavolan M."/>
            <person name="Davis M.J."/>
            <person name="Wilming L.G."/>
            <person name="Aidinis V."/>
            <person name="Allen J.E."/>
            <person name="Ambesi-Impiombato A."/>
            <person name="Apweiler R."/>
            <person name="Aturaliya R.N."/>
            <person name="Bailey T.L."/>
            <person name="Bansal M."/>
            <person name="Baxter L."/>
            <person name="Beisel K.W."/>
            <person name="Bersano T."/>
            <person name="Bono H."/>
            <person name="Chalk A.M."/>
            <person name="Chiu K.P."/>
            <person name="Choudhary V."/>
            <person name="Christoffels A."/>
            <person name="Clutterbuck D.R."/>
            <person name="Crowe M.L."/>
            <person name="Dalla E."/>
            <person name="Dalrymple B.P."/>
            <person name="de Bono B."/>
            <person name="Della Gatta G."/>
            <person name="di Bernardo D."/>
            <person name="Down T."/>
            <person name="Engstrom P."/>
            <person name="Fagiolini M."/>
            <person name="Faulkner G."/>
            <person name="Fletcher C.F."/>
            <person name="Fukushima T."/>
            <person name="Furuno M."/>
            <person name="Futaki S."/>
            <person name="Gariboldi M."/>
            <person name="Georgii-Hemming P."/>
            <person name="Gingeras T.R."/>
            <person name="Gojobori T."/>
            <person name="Green R.E."/>
            <person name="Gustincich S."/>
            <person name="Harbers M."/>
            <person name="Hayashi Y."/>
            <person name="Hensch T.K."/>
            <person name="Hirokawa N."/>
            <person name="Hill D."/>
            <person name="Huminiecki L."/>
            <person name="Iacono M."/>
            <person name="Ikeo K."/>
            <person name="Iwama A."/>
            <person name="Ishikawa T."/>
            <person name="Jakt M."/>
            <person name="Kanapin A."/>
            <person name="Katoh M."/>
            <person name="Kawasawa Y."/>
            <person name="Kelso J."/>
            <person name="Kitamura H."/>
            <person name="Kitano H."/>
            <person name="Kollias G."/>
            <person name="Krishnan S.P."/>
            <person name="Kruger A."/>
            <person name="Kummerfeld S.K."/>
            <person name="Kurochkin I.V."/>
            <person name="Lareau L.F."/>
            <person name="Lazarevic D."/>
            <person name="Lipovich L."/>
            <person name="Liu J."/>
            <person name="Liuni S."/>
            <person name="McWilliam S."/>
            <person name="Madan Babu M."/>
            <person name="Madera M."/>
            <person name="Marchionni L."/>
            <person name="Matsuda H."/>
            <person name="Matsuzawa S."/>
            <person name="Miki H."/>
            <person name="Mignone F."/>
            <person name="Miyake S."/>
            <person name="Morris K."/>
            <person name="Mottagui-Tabar S."/>
            <person name="Mulder N."/>
            <person name="Nakano N."/>
            <person name="Nakauchi H."/>
            <person name="Ng P."/>
            <person name="Nilsson R."/>
            <person name="Nishiguchi S."/>
            <person name="Nishikawa S."/>
            <person name="Nori F."/>
            <person name="Ohara O."/>
            <person name="Okazaki Y."/>
            <person name="Orlando V."/>
            <person name="Pang K.C."/>
            <person name="Pavan W.J."/>
            <person name="Pavesi G."/>
            <person name="Pesole G."/>
            <person name="Petrovsky N."/>
            <person name="Piazza S."/>
            <person name="Reed J."/>
            <person name="Reid J.F."/>
            <person name="Ring B.Z."/>
            <person name="Ringwald M."/>
            <person name="Rost B."/>
            <person name="Ruan Y."/>
            <person name="Salzberg S.L."/>
            <person name="Sandelin A."/>
            <person name="Schneider C."/>
            <person name="Schoenbach C."/>
            <person name="Sekiguchi K."/>
            <person name="Semple C.A."/>
            <person name="Seno S."/>
            <person name="Sessa L."/>
            <person name="Sheng Y."/>
            <person name="Shibata Y."/>
            <person name="Shimada H."/>
            <person name="Shimada K."/>
            <person name="Silva D."/>
            <person name="Sinclair B."/>
            <person name="Sperling S."/>
            <person name="Stupka E."/>
            <person name="Sugiura K."/>
            <person name="Sultana R."/>
            <person name="Takenaka Y."/>
            <person name="Taki K."/>
            <person name="Tammoja K."/>
            <person name="Tan S.L."/>
            <person name="Tang S."/>
            <person name="Taylor M.S."/>
            <person name="Tegner J."/>
            <person name="Teichmann S.A."/>
            <person name="Ueda H.R."/>
            <person name="van Nimwegen E."/>
            <person name="Verardo R."/>
            <person name="Wei C.L."/>
            <person name="Yagi K."/>
            <person name="Yamanishi H."/>
            <person name="Zabarovsky E."/>
            <person name="Zhu S."/>
            <person name="Zimmer A."/>
            <person name="Hide W."/>
            <person name="Bult C."/>
            <person name="Grimmond S.M."/>
            <person name="Teasdale R.D."/>
            <person name="Liu E.T."/>
            <person name="Brusic V."/>
            <person name="Quackenbush J."/>
            <person name="Wahlestedt C."/>
            <person name="Mattick J.S."/>
            <person name="Hume D.A."/>
            <person name="Kai C."/>
            <person name="Sasaki D."/>
            <person name="Tomaru Y."/>
            <person name="Fukuda S."/>
            <person name="Kanamori-Katayama M."/>
            <person name="Suzuki M."/>
            <person name="Aoki J."/>
            <person name="Arakawa T."/>
            <person name="Iida J."/>
            <person name="Imamura K."/>
            <person name="Itoh M."/>
            <person name="Kato T."/>
            <person name="Kawaji H."/>
            <person name="Kawagashira N."/>
            <person name="Kawashima T."/>
            <person name="Kojima M."/>
            <person name="Kondo S."/>
            <person name="Konno H."/>
            <person name="Nakano K."/>
            <person name="Ninomiya N."/>
            <person name="Nishio T."/>
            <person name="Okada M."/>
            <person name="Plessy C."/>
            <person name="Shibata K."/>
            <person name="Shiraki T."/>
            <person name="Suzuki S."/>
            <person name="Tagami M."/>
            <person name="Waki K."/>
            <person name="Watahiki A."/>
            <person name="Okamura-Oho Y."/>
            <person name="Suzuki H."/>
            <person name="Kawai J."/>
            <person name="Hayashizaki Y."/>
        </authorList>
    </citation>
    <scope>NUCLEOTIDE SEQUENCE [LARGE SCALE MRNA] (ISOFORMS 3 AND 5)</scope>
    <source>
        <strain>C57BL/6J</strain>
        <strain>NOD</strain>
        <tissue>Heart</tissue>
        <tissue>Hippocampus</tissue>
        <tissue>Medulla oblongata</tissue>
        <tissue>Sympathetic ganglion</tissue>
        <tissue>Thymus</tissue>
        <tissue>Tongue</tissue>
        <tissue>Vagina</tissue>
    </source>
</reference>
<reference key="7">
    <citation type="journal article" date="2004" name="Genome Res.">
        <title>The status, quality, and expansion of the NIH full-length cDNA project: the Mammalian Gene Collection (MGC).</title>
        <authorList>
            <consortium name="The MGC Project Team"/>
        </authorList>
    </citation>
    <scope>NUCLEOTIDE SEQUENCE [LARGE SCALE MRNA] (ISOFORMS 1 AND 3)</scope>
    <source>
        <strain>C57BL/6J</strain>
        <tissue>Brain</tissue>
        <tissue>Eye</tissue>
    </source>
</reference>
<reference key="8">
    <citation type="submission" date="2007-04" db="UniProtKB">
        <authorList>
            <person name="Lubec G."/>
            <person name="Kang S.U."/>
        </authorList>
    </citation>
    <scope>PROTEIN SEQUENCE OF 103-110; 153-164 AND 204-214</scope>
    <scope>IDENTIFICATION BY MASS SPECTROMETRY</scope>
    <source>
        <strain>C57BL/6J</strain>
        <tissue>Brain</tissue>
    </source>
</reference>
<reference key="9">
    <citation type="journal article" date="2009" name="Cell">
        <title>A class of dynamin-like GTPases involved in the generation of the tubular ER network.</title>
        <authorList>
            <person name="Hu J."/>
            <person name="Shibata Y."/>
            <person name="Zhu P.-P."/>
            <person name="Voss C."/>
            <person name="Rismanchi N."/>
            <person name="Prinz W.A."/>
            <person name="Rapoport T.A."/>
            <person name="Blackstone C."/>
        </authorList>
    </citation>
    <scope>INTERACTION WITH ATL1 AND ATL2</scope>
</reference>
<reference key="10">
    <citation type="journal article" date="2010" name="Cell">
        <title>A tissue-specific atlas of mouse protein phosphorylation and expression.</title>
        <authorList>
            <person name="Huttlin E.L."/>
            <person name="Jedrychowski M.P."/>
            <person name="Elias J.E."/>
            <person name="Goswami T."/>
            <person name="Rad R."/>
            <person name="Beausoleil S.A."/>
            <person name="Villen J."/>
            <person name="Haas W."/>
            <person name="Sowa M.E."/>
            <person name="Gygi S.P."/>
        </authorList>
    </citation>
    <scope>PHOSPHORYLATION [LARGE SCALE ANALYSIS] AT SER-217; SER-225; SER-230; SER-233; SER-529; SER-596; SER-597 AND SER-673</scope>
    <scope>IDENTIFICATION BY MASS SPECTROMETRY [LARGE SCALE ANALYSIS]</scope>
    <source>
        <tissue>Brain</tissue>
        <tissue>Brown adipose tissue</tissue>
        <tissue>Heart</tissue>
        <tissue>Kidney</tissue>
        <tissue>Liver</tissue>
        <tissue>Lung</tissue>
        <tissue>Pancreas</tissue>
        <tissue>Spleen</tissue>
        <tissue>Testis</tissue>
    </source>
</reference>
<reference key="11">
    <citation type="journal article" date="2014" name="Biochem. J.">
        <title>Arl6IP1 has the ability to shape the mammalian ER membrane in a reticulon-like fashion.</title>
        <authorList>
            <person name="Yamamoto Y."/>
            <person name="Yoshida A."/>
            <person name="Miyazaki N."/>
            <person name="Iwasaki K."/>
            <person name="Sakisaka T."/>
        </authorList>
    </citation>
    <scope>FUNCTION</scope>
</reference>
<reference key="12">
    <citation type="journal article" date="2014" name="Kobe J. Med. Sci.">
        <title>Identification and characterization of TMEM33 as a reticulon-binding protein.</title>
        <authorList>
            <person name="Urade T."/>
            <person name="Yamamoto Y."/>
            <person name="Zhang X."/>
            <person name="Ku Y."/>
            <person name="Sakisaka T."/>
        </authorList>
    </citation>
    <scope>INTERACTION WITH TMEM33</scope>
</reference>
<protein>
    <recommendedName>
        <fullName>Reticulon-3</fullName>
    </recommendedName>
</protein>
<evidence type="ECO:0000250" key="1"/>
<evidence type="ECO:0000250" key="2">
    <source>
        <dbReference type="UniProtKB" id="O95197"/>
    </source>
</evidence>
<evidence type="ECO:0000250" key="3">
    <source>
        <dbReference type="UniProtKB" id="Q6RJR6"/>
    </source>
</evidence>
<evidence type="ECO:0000255" key="4"/>
<evidence type="ECO:0000255" key="5">
    <source>
        <dbReference type="PROSITE-ProRule" id="PRU00170"/>
    </source>
</evidence>
<evidence type="ECO:0000256" key="6">
    <source>
        <dbReference type="SAM" id="MobiDB-lite"/>
    </source>
</evidence>
<evidence type="ECO:0000269" key="7">
    <source>
    </source>
</evidence>
<evidence type="ECO:0000269" key="8">
    <source>
    </source>
</evidence>
<evidence type="ECO:0000269" key="9">
    <source>
    </source>
</evidence>
<evidence type="ECO:0000269" key="10">
    <source>
    </source>
</evidence>
<evidence type="ECO:0000269" key="11">
    <source>
    </source>
</evidence>
<evidence type="ECO:0000303" key="12">
    <source>
    </source>
</evidence>
<evidence type="ECO:0000303" key="13">
    <source>
    </source>
</evidence>
<evidence type="ECO:0000303" key="14">
    <source>
    </source>
</evidence>
<evidence type="ECO:0000303" key="15">
    <source>
    </source>
</evidence>
<evidence type="ECO:0000303" key="16">
    <source>
    </source>
</evidence>
<evidence type="ECO:0000303" key="17">
    <source>
    </source>
</evidence>
<evidence type="ECO:0000303" key="18">
    <source ref="5"/>
</evidence>
<evidence type="ECO:0000305" key="19"/>
<evidence type="ECO:0007744" key="20">
    <source>
    </source>
</evidence>
<keyword id="KW-0007">Acetylation</keyword>
<keyword id="KW-0025">Alternative splicing</keyword>
<keyword id="KW-0053">Apoptosis</keyword>
<keyword id="KW-0903">Direct protein sequencing</keyword>
<keyword id="KW-0256">Endoplasmic reticulum</keyword>
<keyword id="KW-0931">ER-Golgi transport</keyword>
<keyword id="KW-0333">Golgi apparatus</keyword>
<keyword id="KW-0472">Membrane</keyword>
<keyword id="KW-0597">Phosphoprotein</keyword>
<keyword id="KW-1185">Reference proteome</keyword>
<keyword id="KW-0812">Transmembrane</keyword>
<keyword id="KW-1133">Transmembrane helix</keyword>
<keyword id="KW-0813">Transport</keyword>
<accession>Q9ES97</accession>
<accession>Q3UF62</accession>
<accession>Q544J1</accession>
<accession>Q68FE4</accession>
<accession>Q6IM69</accession>
<accession>Q6R8K6</accession>
<accession>Q6R8K7</accession>
<accession>Q6T929</accession>
<accession>Q8C6D5</accession>
<accession>Q8CCU2</accession>
<dbReference type="EMBL" id="AB046114">
    <property type="protein sequence ID" value="BAB62070.1"/>
    <property type="molecule type" value="mRNA"/>
</dbReference>
<dbReference type="EMBL" id="BK001796">
    <property type="protein sequence ID" value="DAA01968.1"/>
    <property type="molecule type" value="mRNA"/>
</dbReference>
<dbReference type="EMBL" id="AY164700">
    <property type="protein sequence ID" value="AAP47278.1"/>
    <property type="molecule type" value="mRNA"/>
</dbReference>
<dbReference type="EMBL" id="AY507126">
    <property type="protein sequence ID" value="AAR98631.1"/>
    <property type="molecule type" value="mRNA"/>
</dbReference>
<dbReference type="EMBL" id="AY507127">
    <property type="protein sequence ID" value="AAR98632.1"/>
    <property type="molecule type" value="mRNA"/>
</dbReference>
<dbReference type="EMBL" id="AY427822">
    <property type="protein sequence ID" value="AAR08193.1"/>
    <property type="molecule type" value="mRNA"/>
</dbReference>
<dbReference type="EMBL" id="AY750849">
    <property type="protein sequence ID" value="AAU81931.1"/>
    <property type="molecule type" value="mRNA"/>
</dbReference>
<dbReference type="EMBL" id="AF195940">
    <property type="protein sequence ID" value="AAG31360.1"/>
    <property type="molecule type" value="mRNA"/>
</dbReference>
<dbReference type="EMBL" id="AK032109">
    <property type="protein sequence ID" value="BAC27708.1"/>
    <property type="molecule type" value="mRNA"/>
</dbReference>
<dbReference type="EMBL" id="AK036892">
    <property type="protein sequence ID" value="BAC29625.1"/>
    <property type="molecule type" value="mRNA"/>
</dbReference>
<dbReference type="EMBL" id="AK049845">
    <property type="protein sequence ID" value="BAC33952.1"/>
    <property type="molecule type" value="mRNA"/>
</dbReference>
<dbReference type="EMBL" id="AK075883">
    <property type="protein sequence ID" value="BAC36028.1"/>
    <property type="molecule type" value="mRNA"/>
</dbReference>
<dbReference type="EMBL" id="AK088670">
    <property type="protein sequence ID" value="BAC40493.1"/>
    <property type="molecule type" value="mRNA"/>
</dbReference>
<dbReference type="EMBL" id="AK146505">
    <property type="protein sequence ID" value="BAE27220.1"/>
    <property type="molecule type" value="mRNA"/>
</dbReference>
<dbReference type="EMBL" id="AK148792">
    <property type="protein sequence ID" value="BAE28664.1"/>
    <property type="molecule type" value="mRNA"/>
</dbReference>
<dbReference type="EMBL" id="AK148947">
    <property type="protein sequence ID" value="BAE28699.1"/>
    <property type="molecule type" value="mRNA"/>
</dbReference>
<dbReference type="EMBL" id="AK165683">
    <property type="protein sequence ID" value="BAE38336.1"/>
    <property type="molecule type" value="mRNA"/>
</dbReference>
<dbReference type="EMBL" id="BC014697">
    <property type="protein sequence ID" value="AAH14697.1"/>
    <property type="molecule type" value="mRNA"/>
</dbReference>
<dbReference type="EMBL" id="BC036717">
    <property type="protein sequence ID" value="AAH36717.1"/>
    <property type="molecule type" value="mRNA"/>
</dbReference>
<dbReference type="EMBL" id="BC079882">
    <property type="protein sequence ID" value="AAH79882.1"/>
    <property type="molecule type" value="mRNA"/>
</dbReference>
<dbReference type="CCDS" id="CCDS29525.1">
    <molecule id="Q9ES97-2"/>
</dbReference>
<dbReference type="CCDS" id="CCDS29526.1">
    <molecule id="Q9ES97-3"/>
</dbReference>
<dbReference type="CCDS" id="CCDS37906.1">
    <molecule id="Q9ES97-1"/>
</dbReference>
<dbReference type="CCDS" id="CCDS70927.1">
    <molecule id="Q9ES97-4"/>
</dbReference>
<dbReference type="CCDS" id="CCDS89331.1">
    <molecule id="Q9ES97-5"/>
</dbReference>
<dbReference type="RefSeq" id="NP_001003933.1">
    <molecule id="Q9ES97-2"/>
    <property type="nucleotide sequence ID" value="NM_001003933.2"/>
</dbReference>
<dbReference type="RefSeq" id="NP_001003934.1">
    <molecule id="Q9ES97-1"/>
    <property type="nucleotide sequence ID" value="NM_001003934.2"/>
</dbReference>
<dbReference type="RefSeq" id="NP_001258415.1">
    <molecule id="Q9ES97-5"/>
    <property type="nucleotide sequence ID" value="NM_001271486.1"/>
</dbReference>
<dbReference type="RefSeq" id="NP_001258416.1">
    <molecule id="Q9ES97-4"/>
    <property type="nucleotide sequence ID" value="NM_001271487.1"/>
</dbReference>
<dbReference type="RefSeq" id="NP_444306.1">
    <molecule id="Q9ES97-3"/>
    <property type="nucleotide sequence ID" value="NM_053076.3"/>
</dbReference>
<dbReference type="SMR" id="Q9ES97"/>
<dbReference type="BioGRID" id="203034">
    <property type="interactions" value="13"/>
</dbReference>
<dbReference type="CORUM" id="Q9ES97"/>
<dbReference type="FunCoup" id="Q9ES97">
    <property type="interactions" value="412"/>
</dbReference>
<dbReference type="IntAct" id="Q9ES97">
    <property type="interactions" value="5"/>
</dbReference>
<dbReference type="STRING" id="10090.ENSMUSP00000065810"/>
<dbReference type="TCDB" id="8.A.102.1.2">
    <property type="family name" value="the reticulon (reticulon) family"/>
</dbReference>
<dbReference type="GlyGen" id="Q9ES97">
    <property type="glycosylation" value="6 sites, 1 O-linked glycan (6 sites)"/>
</dbReference>
<dbReference type="iPTMnet" id="Q9ES97"/>
<dbReference type="PhosphoSitePlus" id="Q9ES97"/>
<dbReference type="SwissPalm" id="Q9ES97"/>
<dbReference type="jPOST" id="Q9ES97"/>
<dbReference type="PaxDb" id="10090-ENSMUSP00000065810"/>
<dbReference type="PeptideAtlas" id="Q9ES97"/>
<dbReference type="ProteomicsDB" id="256803">
    <molecule id="Q9ES97-1"/>
</dbReference>
<dbReference type="ProteomicsDB" id="256804">
    <molecule id="Q9ES97-2"/>
</dbReference>
<dbReference type="ProteomicsDB" id="256805">
    <molecule id="Q9ES97-3"/>
</dbReference>
<dbReference type="ProteomicsDB" id="256806">
    <molecule id="Q9ES97-4"/>
</dbReference>
<dbReference type="ProteomicsDB" id="256807">
    <molecule id="Q9ES97-5"/>
</dbReference>
<dbReference type="Pumba" id="Q9ES97"/>
<dbReference type="TopDownProteomics" id="Q9ES97-1">
    <molecule id="Q9ES97-1"/>
</dbReference>
<dbReference type="TopDownProteomics" id="Q9ES97-3">
    <molecule id="Q9ES97-3"/>
</dbReference>
<dbReference type="TopDownProteomics" id="Q9ES97-4">
    <molecule id="Q9ES97-4"/>
</dbReference>
<dbReference type="TopDownProteomics" id="Q9ES97-5">
    <molecule id="Q9ES97-5"/>
</dbReference>
<dbReference type="Antibodypedia" id="2923">
    <property type="antibodies" value="203 antibodies from 32 providers"/>
</dbReference>
<dbReference type="DNASU" id="20168"/>
<dbReference type="Ensembl" id="ENSMUST00000025667.14">
    <molecule id="Q9ES97-4"/>
    <property type="protein sequence ID" value="ENSMUSP00000025667.8"/>
    <property type="gene ID" value="ENSMUSG00000024758.16"/>
</dbReference>
<dbReference type="Ensembl" id="ENSMUST00000065304.13">
    <molecule id="Q9ES97-1"/>
    <property type="protein sequence ID" value="ENSMUSP00000065810.6"/>
    <property type="gene ID" value="ENSMUSG00000024758.16"/>
</dbReference>
<dbReference type="Ensembl" id="ENSMUST00000088169.7">
    <molecule id="Q9ES97-3"/>
    <property type="protein sequence ID" value="ENSMUSP00000085494.7"/>
    <property type="gene ID" value="ENSMUSG00000024758.16"/>
</dbReference>
<dbReference type="Ensembl" id="ENSMUST00000088171.12">
    <molecule id="Q9ES97-2"/>
    <property type="protein sequence ID" value="ENSMUSP00000085496.5"/>
    <property type="gene ID" value="ENSMUSG00000024758.16"/>
</dbReference>
<dbReference type="Ensembl" id="ENSMUST00000235593.2">
    <molecule id="Q9ES97-5"/>
    <property type="protein sequence ID" value="ENSMUSP00000158024.2"/>
    <property type="gene ID" value="ENSMUSG00000024758.16"/>
</dbReference>
<dbReference type="GeneID" id="20168"/>
<dbReference type="KEGG" id="mmu:20168"/>
<dbReference type="UCSC" id="uc008glb.2">
    <molecule id="Q9ES97-1"/>
    <property type="organism name" value="mouse"/>
</dbReference>
<dbReference type="UCSC" id="uc008gld.2">
    <molecule id="Q9ES97-2"/>
    <property type="organism name" value="mouse"/>
</dbReference>
<dbReference type="UCSC" id="uc008gle.2">
    <molecule id="Q9ES97-3"/>
    <property type="organism name" value="mouse"/>
</dbReference>
<dbReference type="UCSC" id="uc012bhv.2">
    <molecule id="Q9ES97-5"/>
    <property type="organism name" value="mouse"/>
</dbReference>
<dbReference type="UCSC" id="uc033hiw.1">
    <molecule id="Q9ES97-4"/>
    <property type="organism name" value="mouse"/>
</dbReference>
<dbReference type="AGR" id="MGI:1339970"/>
<dbReference type="CTD" id="10313"/>
<dbReference type="MGI" id="MGI:1339970">
    <property type="gene designation" value="Rtn3"/>
</dbReference>
<dbReference type="VEuPathDB" id="HostDB:ENSMUSG00000024758"/>
<dbReference type="eggNOG" id="KOG1792">
    <property type="taxonomic scope" value="Eukaryota"/>
</dbReference>
<dbReference type="GeneTree" id="ENSGT00940000157482"/>
<dbReference type="HOGENOM" id="CLU_011704_0_0_1"/>
<dbReference type="InParanoid" id="Q9ES97"/>
<dbReference type="OMA" id="TLWYLFE"/>
<dbReference type="OrthoDB" id="567788at2759"/>
<dbReference type="PhylomeDB" id="Q9ES97"/>
<dbReference type="TreeFam" id="TF105431"/>
<dbReference type="Reactome" id="R-MMU-8849932">
    <property type="pathway name" value="Synaptic adhesion-like molecules"/>
</dbReference>
<dbReference type="BioGRID-ORCS" id="20168">
    <property type="hits" value="2 hits in 78 CRISPR screens"/>
</dbReference>
<dbReference type="CD-CODE" id="CE726F99">
    <property type="entry name" value="Postsynaptic density"/>
</dbReference>
<dbReference type="ChiTaRS" id="Rtn3">
    <property type="organism name" value="mouse"/>
</dbReference>
<dbReference type="PRO" id="PR:Q9ES97"/>
<dbReference type="Proteomes" id="UP000000589">
    <property type="component" value="Chromosome 19"/>
</dbReference>
<dbReference type="RNAct" id="Q9ES97">
    <property type="molecule type" value="protein"/>
</dbReference>
<dbReference type="Bgee" id="ENSMUSG00000024758">
    <property type="expression patterns" value="Expressed in facial nucleus and 276 other cell types or tissues"/>
</dbReference>
<dbReference type="GO" id="GO:0005783">
    <property type="term" value="C:endoplasmic reticulum"/>
    <property type="evidence" value="ECO:0000250"/>
    <property type="project" value="UniProtKB"/>
</dbReference>
<dbReference type="GO" id="GO:0005789">
    <property type="term" value="C:endoplasmic reticulum membrane"/>
    <property type="evidence" value="ECO:0007669"/>
    <property type="project" value="UniProtKB-SubCell"/>
</dbReference>
<dbReference type="GO" id="GO:0005794">
    <property type="term" value="C:Golgi apparatus"/>
    <property type="evidence" value="ECO:0000250"/>
    <property type="project" value="UniProtKB"/>
</dbReference>
<dbReference type="GO" id="GO:0000139">
    <property type="term" value="C:Golgi membrane"/>
    <property type="evidence" value="ECO:0007669"/>
    <property type="project" value="UniProtKB-SubCell"/>
</dbReference>
<dbReference type="GO" id="GO:0045202">
    <property type="term" value="C:synapse"/>
    <property type="evidence" value="ECO:0000314"/>
    <property type="project" value="SynGO"/>
</dbReference>
<dbReference type="GO" id="GO:0006915">
    <property type="term" value="P:apoptotic process"/>
    <property type="evidence" value="ECO:0007669"/>
    <property type="project" value="UniProtKB-KW"/>
</dbReference>
<dbReference type="GO" id="GO:0071787">
    <property type="term" value="P:endoplasmic reticulum tubular network formation"/>
    <property type="evidence" value="ECO:0000314"/>
    <property type="project" value="UniProtKB"/>
</dbReference>
<dbReference type="GO" id="GO:1902430">
    <property type="term" value="P:negative regulation of amyloid-beta formation"/>
    <property type="evidence" value="ECO:0000250"/>
    <property type="project" value="UniProtKB"/>
</dbReference>
<dbReference type="GO" id="GO:0016192">
    <property type="term" value="P:vesicle-mediated transport"/>
    <property type="evidence" value="ECO:0007669"/>
    <property type="project" value="UniProtKB-KW"/>
</dbReference>
<dbReference type="FunFam" id="1.20.5.2480:FF:000001">
    <property type="entry name" value="Reticulon"/>
    <property type="match status" value="1"/>
</dbReference>
<dbReference type="Gene3D" id="1.20.5.2480">
    <property type="match status" value="1"/>
</dbReference>
<dbReference type="InterPro" id="IPR003388">
    <property type="entry name" value="Reticulon"/>
</dbReference>
<dbReference type="InterPro" id="IPR046964">
    <property type="entry name" value="RTN1-4"/>
</dbReference>
<dbReference type="PANTHER" id="PTHR45799:SF4">
    <property type="entry name" value="RETICULON-3"/>
    <property type="match status" value="1"/>
</dbReference>
<dbReference type="PANTHER" id="PTHR45799">
    <property type="entry name" value="RETICULON-LIKE PROTEIN"/>
    <property type="match status" value="1"/>
</dbReference>
<dbReference type="Pfam" id="PF02453">
    <property type="entry name" value="Reticulon"/>
    <property type="match status" value="1"/>
</dbReference>
<dbReference type="PROSITE" id="PS50845">
    <property type="entry name" value="RETICULON"/>
    <property type="match status" value="1"/>
</dbReference>
<proteinExistence type="evidence at protein level"/>
<gene>
    <name type="primary">Rtn3</name>
</gene>
<organism>
    <name type="scientific">Mus musculus</name>
    <name type="common">Mouse</name>
    <dbReference type="NCBI Taxonomy" id="10090"/>
    <lineage>
        <taxon>Eukaryota</taxon>
        <taxon>Metazoa</taxon>
        <taxon>Chordata</taxon>
        <taxon>Craniata</taxon>
        <taxon>Vertebrata</taxon>
        <taxon>Euteleostomi</taxon>
        <taxon>Mammalia</taxon>
        <taxon>Eutheria</taxon>
        <taxon>Euarchontoglires</taxon>
        <taxon>Glires</taxon>
        <taxon>Rodentia</taxon>
        <taxon>Myomorpha</taxon>
        <taxon>Muroidea</taxon>
        <taxon>Muridae</taxon>
        <taxon>Murinae</taxon>
        <taxon>Mus</taxon>
        <taxon>Mus</taxon>
    </lineage>
</organism>
<sequence>MAESSAATQSPSVSSSSSGAEPSALGGGGGSPGACPALGAKSCGSSCADSFVSSSSSQPVSIFSTSQAGLSSLCSDEPPSKSMTSSFLSSSEIHNPDPTTPLGEKSETLGSQFVLAKGKDPLVLLDKKKLDSPQGTNKDRVDAPVSLATGIPCSHPSIPDSFPEQPAFLSKEIGPAEEWVVKDQEPKNPNKVPDGEDRSALDFGQSKAEHICTYSLSPSELPVASVEKDSPESPFEVIIDKATFDREFKDLYKENPNDLGGWAAHGDRESPADLLEMNDKLFPLRNKEAGRYPSSVLLGRQFSHTTAALEEVSRCVNDMHNFTNEILTWDLDPQAKQQANKTSCTTESTGLDRSELRSEIPVINLKTNPQQKMPVCSFNGSTPITKSTGDWTEAFTEGKPVRDYLSSTKEAGGNGVPGSSQLHSELPGSMPEKWVSGSGAATVEVTLPNLRGAWPNSVMGEVTEVDSSGESDDTVIEDITEKPDSLPSAAAKTSEREIKETPSRETVRSEMCENSEQPQAQPETPTQKSLEGEVASQVPNTLNEVTPEKLDMTNNPKVCSAAPPSVLNETGFSLTVPASAKLESLLGKYVEDTDGSSPEDLMAVLTGAEEKGIVDKEEGDVLEAVLEKIADFKNTLPVELLHESELSGSETKNIKSKYSEDSRETTGGAPTMSPDLEQEQLTIRAIKELGERQAEKVQDEGISSGGKLKQTFAPQSGPQSSSDILEHTDVKTGSDLGIPKNPTIIKNTRIDSISSLTKTEMVNKNVLARLLSDFPVHDLIFWRDVKKTGFVFGTTLIMLLSLAAFSVISVVSYLILALLSVTISFRVYKSVIQAVQKSEEGHPFKAYLDVDITLSSEAFHNYMNAAMVHVNKALKLIIRLFLVEDLVDSLKLAVFMWLMTYVGAVFNGITLLILAELLVFSVPIVYEKYKTQIDHYVGIARDQTKSIVEKIQAKLPGIAKKKAE</sequence>
<feature type="initiator methionine" description="Removed" evidence="2">
    <location>
        <position position="1"/>
    </location>
</feature>
<feature type="chain" id="PRO_0000168164" description="Reticulon-3">
    <location>
        <begin position="2"/>
        <end position="964"/>
    </location>
</feature>
<feature type="topological domain" description="Cytoplasmic" evidence="4">
    <location>
        <begin position="2"/>
        <end position="795"/>
    </location>
</feature>
<feature type="intramembrane region" description="Helical" evidence="4">
    <location>
        <begin position="796"/>
        <end position="819"/>
    </location>
</feature>
<feature type="topological domain" description="Cytoplasmic" evidence="4">
    <location>
        <begin position="820"/>
        <end position="876"/>
    </location>
</feature>
<feature type="intramembrane region" description="Helical" evidence="4">
    <location>
        <begin position="877"/>
        <end position="899"/>
    </location>
</feature>
<feature type="topological domain" description="Cytoplasmic" evidence="4">
    <location>
        <begin position="900"/>
        <end position="903"/>
    </location>
</feature>
<feature type="intramembrane region" description="Helical" evidence="4">
    <location>
        <begin position="904"/>
        <end position="926"/>
    </location>
</feature>
<feature type="topological domain" description="Cytoplasmic" evidence="4">
    <location>
        <begin position="927"/>
        <end position="964"/>
    </location>
</feature>
<feature type="domain" description="Reticulon" evidence="5">
    <location>
        <begin position="776"/>
        <end position="964"/>
    </location>
</feature>
<feature type="region of interest" description="Disordered" evidence="6">
    <location>
        <begin position="1"/>
        <end position="32"/>
    </location>
</feature>
<feature type="region of interest" description="Disordered" evidence="6">
    <location>
        <begin position="68"/>
        <end position="109"/>
    </location>
</feature>
<feature type="region of interest" description="Disordered" evidence="6">
    <location>
        <begin position="179"/>
        <end position="200"/>
    </location>
</feature>
<feature type="region of interest" description="Disordered" evidence="6">
    <location>
        <begin position="479"/>
        <end position="536"/>
    </location>
</feature>
<feature type="region of interest" description="Disordered" evidence="6">
    <location>
        <begin position="645"/>
        <end position="674"/>
    </location>
</feature>
<feature type="region of interest" description="Disordered" evidence="6">
    <location>
        <begin position="697"/>
        <end position="723"/>
    </location>
</feature>
<feature type="region of interest" description="Interaction with FADD" evidence="1">
    <location>
        <begin position="919"/>
        <end position="964"/>
    </location>
</feature>
<feature type="region of interest" description="Interaction with BACE1" evidence="1">
    <location>
        <begin position="932"/>
        <end position="934"/>
    </location>
</feature>
<feature type="compositionally biased region" description="Low complexity" evidence="6">
    <location>
        <begin position="1"/>
        <end position="24"/>
    </location>
</feature>
<feature type="compositionally biased region" description="Low complexity" evidence="6">
    <location>
        <begin position="80"/>
        <end position="91"/>
    </location>
</feature>
<feature type="compositionally biased region" description="Basic and acidic residues" evidence="6">
    <location>
        <begin position="493"/>
        <end position="511"/>
    </location>
</feature>
<feature type="compositionally biased region" description="Low complexity" evidence="6">
    <location>
        <begin position="516"/>
        <end position="527"/>
    </location>
</feature>
<feature type="compositionally biased region" description="Polar residues" evidence="6">
    <location>
        <begin position="712"/>
        <end position="723"/>
    </location>
</feature>
<feature type="modified residue" description="N-acetylalanine" evidence="2">
    <location>
        <position position="2"/>
    </location>
</feature>
<feature type="modified residue" description="Phosphoserine" evidence="2">
    <location>
        <position position="31"/>
    </location>
</feature>
<feature type="modified residue" description="Phosphoserine" evidence="20">
    <location>
        <position position="217"/>
    </location>
</feature>
<feature type="modified residue" description="Phosphoserine" evidence="20">
    <location>
        <position position="225"/>
    </location>
</feature>
<feature type="modified residue" description="Phosphoserine" evidence="20">
    <location>
        <position position="230"/>
    </location>
</feature>
<feature type="modified residue" description="Phosphoserine" evidence="20">
    <location>
        <position position="233"/>
    </location>
</feature>
<feature type="modified residue" description="Phosphoserine" evidence="3">
    <location>
        <position position="270"/>
    </location>
</feature>
<feature type="modified residue" description="Phosphoserine" evidence="2">
    <location>
        <position position="303"/>
    </location>
</feature>
<feature type="modified residue" description="Phosphoserine" evidence="2">
    <location>
        <position position="429"/>
    </location>
</feature>
<feature type="modified residue" description="Phosphoserine" evidence="20">
    <location>
        <position position="529"/>
    </location>
</feature>
<feature type="modified residue" description="Phosphothreonine" evidence="3">
    <location>
        <position position="593"/>
    </location>
</feature>
<feature type="modified residue" description="Phosphoserine" evidence="20">
    <location>
        <position position="596"/>
    </location>
</feature>
<feature type="modified residue" description="Phosphoserine" evidence="20">
    <location>
        <position position="597"/>
    </location>
</feature>
<feature type="modified residue" description="Phosphoserine" evidence="20">
    <location>
        <position position="673"/>
    </location>
</feature>
<feature type="splice variant" id="VSP_023762" description="In isoform 3." evidence="12 13 14 15 17 18">
    <location>
        <begin position="49"/>
        <end position="775"/>
    </location>
</feature>
<feature type="splice variant" id="VSP_023763" description="In isoform 2." evidence="16">
    <location>
        <begin position="49"/>
        <end position="67"/>
    </location>
</feature>
<feature type="splice variant" id="VSP_023764" description="In isoform 4." evidence="19">
    <location>
        <begin position="68"/>
        <end position="775"/>
    </location>
</feature>
<feature type="splice variant" id="VSP_023765" description="In isoform 5." evidence="17">
    <location>
        <begin position="68"/>
        <end position="388"/>
    </location>
</feature>
<feature type="sequence conflict" description="In Ref. 3; AAR98631." evidence="19" ref="3">
    <original>S</original>
    <variation>P</variation>
    <location>
        <position position="17"/>
    </location>
</feature>
<feature type="sequence conflict" description="In Ref. 3; AAR98632." evidence="19" ref="3">
    <original>S</original>
    <variation>P</variation>
    <location>
        <position position="215"/>
    </location>
</feature>
<feature type="sequence conflict" description="In Ref. 3; AAR98632." evidence="19" ref="3">
    <original>E</original>
    <variation>G</variation>
    <location>
        <position position="355"/>
    </location>
</feature>
<feature type="sequence conflict" description="In Ref. 6; BAC36028." evidence="19" ref="6">
    <original>M</original>
    <variation>I</variation>
    <location>
        <position position="899"/>
    </location>
</feature>
<feature type="sequence conflict" description="In Ref. 6; BAE28664/BAE28699." evidence="19" ref="6">
    <original>E</original>
    <variation>K</variation>
    <location>
        <position position="964"/>
    </location>
</feature>
<comment type="function">
    <text evidence="2 10">May be involved in membrane trafficking in the early secretory pathway. Inhibits BACE1 activity and amyloid precursor protein processing. May induce caspase-8 cascade and apoptosis. May favor BCL2 translocation to the mitochondria upon endoplasmic reticulum stress (PubMed:24262037). Induces the formation of endoplasmic reticulum tubules. Also acts as an inflammation-resolving regulator by interacting with both TRIM25 and RIGI, subsequently impairing RIGI 'Lys-63'-linked polyubiquitination leading to IRF3 and NF-kappa-B inhibition (By similarity).</text>
</comment>
<comment type="subunit">
    <text evidence="2 9 11">Homodimer. Interacts with RTN4. Isoform 3 interacts with BACE1, BACE2, BCL2 and FADD (By similarity). Interacts with ATL1 and ATL2 (PubMed:19665976). Isoform 3 interacts with TMEM33 (PubMed:25612671). Interacts with ZFYVE27 and with KIF5A in a ZFYVE27-dependent manner (By similarity). Interacts with RIGI (By similarity). Interacts with TRIM25 (By similarity).</text>
</comment>
<comment type="interaction">
    <interactant intactId="EBI-1487798">
        <id>Q9ES97-3</id>
    </interactant>
    <interactant intactId="EBI-2410266">
        <id>Q8WXF7</id>
        <label>ATL1</label>
    </interactant>
    <organismsDiffer>true</organismsDiffer>
    <experiments>3</experiments>
</comment>
<comment type="interaction">
    <interactant intactId="EBI-1487798">
        <id>Q9ES97-3</id>
    </interactant>
    <interactant intactId="EBI-2410430">
        <id>Q8NHH9</id>
        <label>ATL2</label>
    </interactant>
    <organismsDiffer>true</organismsDiffer>
    <experiments>2</experiments>
</comment>
<comment type="subcellular location">
    <subcellularLocation>
        <location evidence="7">Endoplasmic reticulum membrane</location>
        <topology evidence="7">Multi-pass membrane protein</topology>
    </subcellularLocation>
    <subcellularLocation>
        <location evidence="2">Golgi apparatus membrane</location>
        <topology evidence="4">Multi-pass membrane protein</topology>
    </subcellularLocation>
</comment>
<comment type="alternative products">
    <event type="alternative splicing"/>
    <isoform>
        <id>Q9ES97-1</id>
        <name>1</name>
        <name>A1</name>
        <name>A4b</name>
        <name>B</name>
        <sequence type="displayed"/>
    </isoform>
    <isoform>
        <id>Q9ES97-2</id>
        <name>2</name>
        <name>A2</name>
        <name>A3b</name>
        <sequence type="described" ref="VSP_023763"/>
    </isoform>
    <isoform>
        <id>Q9ES97-3</id>
        <name>3</name>
        <name>B1</name>
        <name>A1</name>
        <name>Rtn3c</name>
        <sequence type="described" ref="VSP_023762"/>
    </isoform>
    <isoform>
        <id>Q9ES97-4</id>
        <name>4</name>
        <name>B2</name>
        <name>A2</name>
        <sequence type="described" ref="VSP_023764"/>
    </isoform>
    <isoform>
        <id>Q9ES97-5</id>
        <name>5</name>
        <name>A4a</name>
        <sequence type="described" ref="VSP_023765"/>
    </isoform>
</comment>
<comment type="tissue specificity">
    <text evidence="7 8">Isoform 1, isoform 3, isoform 4 and isoform 5 are expressed in spinal cord. Isoform 1 is present in brain, where it is expressed in the neurons of cerebral cortex, hippocampus, hypothalamus and cerebellum (at protein level).</text>
</comment>
<name>RTN3_MOUSE</name>